<sequence>MRLLALHVHDFRNLPQVQLTPSAHATIAVGQNGQGKTNLLEALYFLATLKPLRAGRLSELVRWGSQGARVTGRFLLKGAEREIAVEVGGGTRQAFVDGKKASSLEDYFGGVSVVAFTPDDLEVVKGGPDSRRGFLDRAVFNRFPAFLRESREYARALKNRNRLLREGHTVDAVYLEAYDETLAKAGARIYSRRRALMAELAPRAQATFASIGRTVDPAVYNYRPAHLEGDFAAADETALAAMLRESLSARLRRDMERGFTSVGPHSDDVSVTLGGRSARAYASQGQQRALVLGWKIAEIENLEAAMGFLPLLLLDDVSSELDPERNAYLMGYLAQSGAQVVLTTTDGSLVRGAAADDTLWLDVHGGQVAVRADAEPPPAN</sequence>
<protein>
    <recommendedName>
        <fullName evidence="1">DNA replication and repair protein RecF</fullName>
    </recommendedName>
</protein>
<reference key="1">
    <citation type="journal article" date="2006" name="Proc. Natl. Acad. Sci. U.S.A.">
        <title>Evolution of sensory complexity recorded in a myxobacterial genome.</title>
        <authorList>
            <person name="Goldman B.S."/>
            <person name="Nierman W.C."/>
            <person name="Kaiser D."/>
            <person name="Slater S.C."/>
            <person name="Durkin A.S."/>
            <person name="Eisen J.A."/>
            <person name="Ronning C.M."/>
            <person name="Barbazuk W.B."/>
            <person name="Blanchard M."/>
            <person name="Field C."/>
            <person name="Halling C."/>
            <person name="Hinkle G."/>
            <person name="Iartchuk O."/>
            <person name="Kim H.S."/>
            <person name="Mackenzie C."/>
            <person name="Madupu R."/>
            <person name="Miller N."/>
            <person name="Shvartsbeyn A."/>
            <person name="Sullivan S.A."/>
            <person name="Vaudin M."/>
            <person name="Wiegand R."/>
            <person name="Kaplan H.B."/>
        </authorList>
    </citation>
    <scope>NUCLEOTIDE SEQUENCE [LARGE SCALE GENOMIC DNA]</scope>
    <source>
        <strain>DK1622</strain>
    </source>
</reference>
<gene>
    <name evidence="1" type="primary">recF</name>
    <name type="ordered locus">MXAN_0246</name>
</gene>
<feature type="chain" id="PRO_1000048549" description="DNA replication and repair protein RecF">
    <location>
        <begin position="1"/>
        <end position="380"/>
    </location>
</feature>
<feature type="binding site" evidence="1">
    <location>
        <begin position="30"/>
        <end position="37"/>
    </location>
    <ligand>
        <name>ATP</name>
        <dbReference type="ChEBI" id="CHEBI:30616"/>
    </ligand>
</feature>
<accession>Q1DFP6</accession>
<proteinExistence type="inferred from homology"/>
<keyword id="KW-0067">ATP-binding</keyword>
<keyword id="KW-0963">Cytoplasm</keyword>
<keyword id="KW-0227">DNA damage</keyword>
<keyword id="KW-0234">DNA repair</keyword>
<keyword id="KW-0235">DNA replication</keyword>
<keyword id="KW-0238">DNA-binding</keyword>
<keyword id="KW-0547">Nucleotide-binding</keyword>
<keyword id="KW-1185">Reference proteome</keyword>
<keyword id="KW-0742">SOS response</keyword>
<evidence type="ECO:0000255" key="1">
    <source>
        <dbReference type="HAMAP-Rule" id="MF_00365"/>
    </source>
</evidence>
<comment type="function">
    <text evidence="1">The RecF protein is involved in DNA metabolism; it is required for DNA replication and normal SOS inducibility. RecF binds preferentially to single-stranded, linear DNA. It also seems to bind ATP.</text>
</comment>
<comment type="subcellular location">
    <subcellularLocation>
        <location evidence="1">Cytoplasm</location>
    </subcellularLocation>
</comment>
<comment type="similarity">
    <text evidence="1">Belongs to the RecF family.</text>
</comment>
<dbReference type="EMBL" id="CP000113">
    <property type="protein sequence ID" value="ABF92338.1"/>
    <property type="molecule type" value="Genomic_DNA"/>
</dbReference>
<dbReference type="RefSeq" id="WP_011550391.1">
    <property type="nucleotide sequence ID" value="NC_008095.1"/>
</dbReference>
<dbReference type="SMR" id="Q1DFP6"/>
<dbReference type="STRING" id="246197.MXAN_0246"/>
<dbReference type="EnsemblBacteria" id="ABF92338">
    <property type="protein sequence ID" value="ABF92338"/>
    <property type="gene ID" value="MXAN_0246"/>
</dbReference>
<dbReference type="GeneID" id="41357746"/>
<dbReference type="KEGG" id="mxa:MXAN_0246"/>
<dbReference type="eggNOG" id="COG1195">
    <property type="taxonomic scope" value="Bacteria"/>
</dbReference>
<dbReference type="HOGENOM" id="CLU_040267_0_1_7"/>
<dbReference type="OrthoDB" id="9803889at2"/>
<dbReference type="Proteomes" id="UP000002402">
    <property type="component" value="Chromosome"/>
</dbReference>
<dbReference type="GO" id="GO:0005737">
    <property type="term" value="C:cytoplasm"/>
    <property type="evidence" value="ECO:0007669"/>
    <property type="project" value="UniProtKB-SubCell"/>
</dbReference>
<dbReference type="GO" id="GO:0005524">
    <property type="term" value="F:ATP binding"/>
    <property type="evidence" value="ECO:0007669"/>
    <property type="project" value="UniProtKB-UniRule"/>
</dbReference>
<dbReference type="GO" id="GO:0003697">
    <property type="term" value="F:single-stranded DNA binding"/>
    <property type="evidence" value="ECO:0007669"/>
    <property type="project" value="UniProtKB-UniRule"/>
</dbReference>
<dbReference type="GO" id="GO:0006260">
    <property type="term" value="P:DNA replication"/>
    <property type="evidence" value="ECO:0007669"/>
    <property type="project" value="UniProtKB-UniRule"/>
</dbReference>
<dbReference type="GO" id="GO:0000731">
    <property type="term" value="P:DNA synthesis involved in DNA repair"/>
    <property type="evidence" value="ECO:0007669"/>
    <property type="project" value="TreeGrafter"/>
</dbReference>
<dbReference type="GO" id="GO:0006302">
    <property type="term" value="P:double-strand break repair"/>
    <property type="evidence" value="ECO:0007669"/>
    <property type="project" value="TreeGrafter"/>
</dbReference>
<dbReference type="GO" id="GO:0009432">
    <property type="term" value="P:SOS response"/>
    <property type="evidence" value="ECO:0007669"/>
    <property type="project" value="UniProtKB-UniRule"/>
</dbReference>
<dbReference type="Gene3D" id="3.40.50.300">
    <property type="entry name" value="P-loop containing nucleotide triphosphate hydrolases"/>
    <property type="match status" value="1"/>
</dbReference>
<dbReference type="Gene3D" id="1.20.1050.90">
    <property type="entry name" value="RecF/RecN/SMC, N-terminal domain"/>
    <property type="match status" value="1"/>
</dbReference>
<dbReference type="HAMAP" id="MF_00365">
    <property type="entry name" value="RecF"/>
    <property type="match status" value="1"/>
</dbReference>
<dbReference type="InterPro" id="IPR001238">
    <property type="entry name" value="DNA-binding_RecF"/>
</dbReference>
<dbReference type="InterPro" id="IPR018078">
    <property type="entry name" value="DNA-binding_RecF_CS"/>
</dbReference>
<dbReference type="InterPro" id="IPR027417">
    <property type="entry name" value="P-loop_NTPase"/>
</dbReference>
<dbReference type="InterPro" id="IPR003395">
    <property type="entry name" value="RecF/RecN/SMC_N"/>
</dbReference>
<dbReference type="InterPro" id="IPR042174">
    <property type="entry name" value="RecF_2"/>
</dbReference>
<dbReference type="NCBIfam" id="TIGR00611">
    <property type="entry name" value="recf"/>
    <property type="match status" value="1"/>
</dbReference>
<dbReference type="PANTHER" id="PTHR32182">
    <property type="entry name" value="DNA REPLICATION AND REPAIR PROTEIN RECF"/>
    <property type="match status" value="1"/>
</dbReference>
<dbReference type="PANTHER" id="PTHR32182:SF0">
    <property type="entry name" value="DNA REPLICATION AND REPAIR PROTEIN RECF"/>
    <property type="match status" value="1"/>
</dbReference>
<dbReference type="Pfam" id="PF02463">
    <property type="entry name" value="SMC_N"/>
    <property type="match status" value="1"/>
</dbReference>
<dbReference type="SUPFAM" id="SSF52540">
    <property type="entry name" value="P-loop containing nucleoside triphosphate hydrolases"/>
    <property type="match status" value="1"/>
</dbReference>
<dbReference type="PROSITE" id="PS00618">
    <property type="entry name" value="RECF_2"/>
    <property type="match status" value="1"/>
</dbReference>
<organism>
    <name type="scientific">Myxococcus xanthus (strain DK1622)</name>
    <dbReference type="NCBI Taxonomy" id="246197"/>
    <lineage>
        <taxon>Bacteria</taxon>
        <taxon>Pseudomonadati</taxon>
        <taxon>Myxococcota</taxon>
        <taxon>Myxococcia</taxon>
        <taxon>Myxococcales</taxon>
        <taxon>Cystobacterineae</taxon>
        <taxon>Myxococcaceae</taxon>
        <taxon>Myxococcus</taxon>
    </lineage>
</organism>
<name>RECF_MYXXD</name>